<gene>
    <name evidence="1" type="primary">groES</name>
    <name evidence="1" type="synonym">groS</name>
    <name type="ordered locus">BC_0294</name>
</gene>
<feature type="chain" id="PRO_0000174690" description="Co-chaperonin GroES">
    <location>
        <begin position="1"/>
        <end position="94"/>
    </location>
</feature>
<comment type="function">
    <text evidence="1">Together with the chaperonin GroEL, plays an essential role in assisting protein folding. The GroEL-GroES system forms a nano-cage that allows encapsulation of the non-native substrate proteins and provides a physical environment optimized to promote and accelerate protein folding. GroES binds to the apical surface of the GroEL ring, thereby capping the opening of the GroEL channel.</text>
</comment>
<comment type="subunit">
    <text evidence="1">Heptamer of 7 subunits arranged in a ring. Interacts with the chaperonin GroEL.</text>
</comment>
<comment type="subcellular location">
    <subcellularLocation>
        <location evidence="1">Cytoplasm</location>
    </subcellularLocation>
</comment>
<comment type="similarity">
    <text evidence="1">Belongs to the GroES chaperonin family.</text>
</comment>
<comment type="sequence caution" evidence="2">
    <conflict type="erroneous initiation">
        <sequence resource="EMBL-CDS" id="AAP07346"/>
    </conflict>
</comment>
<accession>Q814B1</accession>
<keyword id="KW-0143">Chaperone</keyword>
<keyword id="KW-0963">Cytoplasm</keyword>
<keyword id="KW-1185">Reference proteome</keyword>
<proteinExistence type="inferred from homology"/>
<name>CH10_BACCR</name>
<organism>
    <name type="scientific">Bacillus cereus (strain ATCC 14579 / DSM 31 / CCUG 7414 / JCM 2152 / NBRC 15305 / NCIMB 9373 / NCTC 2599 / NRRL B-3711)</name>
    <dbReference type="NCBI Taxonomy" id="226900"/>
    <lineage>
        <taxon>Bacteria</taxon>
        <taxon>Bacillati</taxon>
        <taxon>Bacillota</taxon>
        <taxon>Bacilli</taxon>
        <taxon>Bacillales</taxon>
        <taxon>Bacillaceae</taxon>
        <taxon>Bacillus</taxon>
        <taxon>Bacillus cereus group</taxon>
    </lineage>
</organism>
<reference key="1">
    <citation type="journal article" date="2003" name="Nature">
        <title>Genome sequence of Bacillus cereus and comparative analysis with Bacillus anthracis.</title>
        <authorList>
            <person name="Ivanova N."/>
            <person name="Sorokin A."/>
            <person name="Anderson I."/>
            <person name="Galleron N."/>
            <person name="Candelon B."/>
            <person name="Kapatral V."/>
            <person name="Bhattacharyya A."/>
            <person name="Reznik G."/>
            <person name="Mikhailova N."/>
            <person name="Lapidus A."/>
            <person name="Chu L."/>
            <person name="Mazur M."/>
            <person name="Goltsman E."/>
            <person name="Larsen N."/>
            <person name="D'Souza M."/>
            <person name="Walunas T."/>
            <person name="Grechkin Y."/>
            <person name="Pusch G."/>
            <person name="Haselkorn R."/>
            <person name="Fonstein M."/>
            <person name="Ehrlich S.D."/>
            <person name="Overbeek R."/>
            <person name="Kyrpides N.C."/>
        </authorList>
    </citation>
    <scope>NUCLEOTIDE SEQUENCE [LARGE SCALE GENOMIC DNA]</scope>
    <source>
        <strain>ATCC 14579 / DSM 31 / CCUG 7414 / JCM 2152 / NBRC 15305 / NCIMB 9373 / NCTC 2599 / NRRL B-3711</strain>
    </source>
</reference>
<sequence>MLKPLGDRVVIELVQAEEKTASGIVLPDTAKEKPQEGKVVAVGTGRVLENGERVALEVAAGDLIIFSKYAGTEVKYEGTDYLILRESDILAVIG</sequence>
<evidence type="ECO:0000255" key="1">
    <source>
        <dbReference type="HAMAP-Rule" id="MF_00580"/>
    </source>
</evidence>
<evidence type="ECO:0000305" key="2"/>
<dbReference type="EMBL" id="AE016877">
    <property type="protein sequence ID" value="AAP07346.1"/>
    <property type="status" value="ALT_INIT"/>
    <property type="molecule type" value="Genomic_DNA"/>
</dbReference>
<dbReference type="RefSeq" id="NP_830145.2">
    <property type="nucleotide sequence ID" value="NC_004722.1"/>
</dbReference>
<dbReference type="RefSeq" id="WP_000917311.1">
    <property type="nucleotide sequence ID" value="NZ_CP138336.1"/>
</dbReference>
<dbReference type="SMR" id="Q814B1"/>
<dbReference type="STRING" id="226900.BC_0294"/>
<dbReference type="MetOSite" id="Q814B1"/>
<dbReference type="GeneID" id="72447091"/>
<dbReference type="KEGG" id="bce:BC0294"/>
<dbReference type="PATRIC" id="fig|226900.8.peg.278"/>
<dbReference type="HOGENOM" id="CLU_132825_2_0_9"/>
<dbReference type="OrthoDB" id="9806791at2"/>
<dbReference type="Proteomes" id="UP000001417">
    <property type="component" value="Chromosome"/>
</dbReference>
<dbReference type="GO" id="GO:0005737">
    <property type="term" value="C:cytoplasm"/>
    <property type="evidence" value="ECO:0007669"/>
    <property type="project" value="UniProtKB-SubCell"/>
</dbReference>
<dbReference type="GO" id="GO:0005524">
    <property type="term" value="F:ATP binding"/>
    <property type="evidence" value="ECO:0007669"/>
    <property type="project" value="InterPro"/>
</dbReference>
<dbReference type="GO" id="GO:0046872">
    <property type="term" value="F:metal ion binding"/>
    <property type="evidence" value="ECO:0000318"/>
    <property type="project" value="GO_Central"/>
</dbReference>
<dbReference type="GO" id="GO:0044183">
    <property type="term" value="F:protein folding chaperone"/>
    <property type="evidence" value="ECO:0007669"/>
    <property type="project" value="InterPro"/>
</dbReference>
<dbReference type="GO" id="GO:0051087">
    <property type="term" value="F:protein-folding chaperone binding"/>
    <property type="evidence" value="ECO:0000318"/>
    <property type="project" value="GO_Central"/>
</dbReference>
<dbReference type="GO" id="GO:0051082">
    <property type="term" value="F:unfolded protein binding"/>
    <property type="evidence" value="ECO:0000318"/>
    <property type="project" value="GO_Central"/>
</dbReference>
<dbReference type="GO" id="GO:0051085">
    <property type="term" value="P:chaperone cofactor-dependent protein refolding"/>
    <property type="evidence" value="ECO:0000318"/>
    <property type="project" value="GO_Central"/>
</dbReference>
<dbReference type="CDD" id="cd00320">
    <property type="entry name" value="cpn10"/>
    <property type="match status" value="1"/>
</dbReference>
<dbReference type="FunFam" id="2.30.33.40:FF:000001">
    <property type="entry name" value="10 kDa chaperonin"/>
    <property type="match status" value="1"/>
</dbReference>
<dbReference type="Gene3D" id="2.30.33.40">
    <property type="entry name" value="GroES chaperonin"/>
    <property type="match status" value="1"/>
</dbReference>
<dbReference type="HAMAP" id="MF_00580">
    <property type="entry name" value="CH10"/>
    <property type="match status" value="1"/>
</dbReference>
<dbReference type="InterPro" id="IPR020818">
    <property type="entry name" value="Chaperonin_GroES"/>
</dbReference>
<dbReference type="InterPro" id="IPR037124">
    <property type="entry name" value="Chaperonin_GroES_sf"/>
</dbReference>
<dbReference type="InterPro" id="IPR018369">
    <property type="entry name" value="Chaprnonin_Cpn10_CS"/>
</dbReference>
<dbReference type="InterPro" id="IPR011032">
    <property type="entry name" value="GroES-like_sf"/>
</dbReference>
<dbReference type="NCBIfam" id="NF001527">
    <property type="entry name" value="PRK00364.1-2"/>
    <property type="match status" value="1"/>
</dbReference>
<dbReference type="NCBIfam" id="NF001530">
    <property type="entry name" value="PRK00364.1-6"/>
    <property type="match status" value="1"/>
</dbReference>
<dbReference type="NCBIfam" id="NF001531">
    <property type="entry name" value="PRK00364.2-2"/>
    <property type="match status" value="1"/>
</dbReference>
<dbReference type="NCBIfam" id="NF001533">
    <property type="entry name" value="PRK00364.2-4"/>
    <property type="match status" value="1"/>
</dbReference>
<dbReference type="NCBIfam" id="NF001534">
    <property type="entry name" value="PRK00364.2-5"/>
    <property type="match status" value="1"/>
</dbReference>
<dbReference type="PANTHER" id="PTHR10772">
    <property type="entry name" value="10 KDA HEAT SHOCK PROTEIN"/>
    <property type="match status" value="1"/>
</dbReference>
<dbReference type="PANTHER" id="PTHR10772:SF58">
    <property type="entry name" value="CO-CHAPERONIN GROES"/>
    <property type="match status" value="1"/>
</dbReference>
<dbReference type="Pfam" id="PF00166">
    <property type="entry name" value="Cpn10"/>
    <property type="match status" value="1"/>
</dbReference>
<dbReference type="PRINTS" id="PR00297">
    <property type="entry name" value="CHAPERONIN10"/>
</dbReference>
<dbReference type="SMART" id="SM00883">
    <property type="entry name" value="Cpn10"/>
    <property type="match status" value="1"/>
</dbReference>
<dbReference type="SUPFAM" id="SSF50129">
    <property type="entry name" value="GroES-like"/>
    <property type="match status" value="1"/>
</dbReference>
<dbReference type="PROSITE" id="PS00681">
    <property type="entry name" value="CHAPERONINS_CPN10"/>
    <property type="match status" value="1"/>
</dbReference>
<protein>
    <recommendedName>
        <fullName evidence="1">Co-chaperonin GroES</fullName>
    </recommendedName>
    <alternativeName>
        <fullName evidence="1">10 kDa chaperonin</fullName>
    </alternativeName>
    <alternativeName>
        <fullName evidence="1">Chaperonin-10</fullName>
        <shortName evidence="1">Cpn10</shortName>
    </alternativeName>
</protein>